<organism>
    <name type="scientific">Streptococcus agalactiae serotype V (strain ATCC BAA-611 / 2603 V/R)</name>
    <dbReference type="NCBI Taxonomy" id="208435"/>
    <lineage>
        <taxon>Bacteria</taxon>
        <taxon>Bacillati</taxon>
        <taxon>Bacillota</taxon>
        <taxon>Bacilli</taxon>
        <taxon>Lactobacillales</taxon>
        <taxon>Streptococcaceae</taxon>
        <taxon>Streptococcus</taxon>
    </lineage>
</organism>
<protein>
    <recommendedName>
        <fullName evidence="1">Glutamate 5-kinase</fullName>
        <ecNumber evidence="1">2.7.2.11</ecNumber>
    </recommendedName>
    <alternativeName>
        <fullName evidence="1">Gamma-glutamyl kinase</fullName>
        <shortName evidence="1">GK</shortName>
    </alternativeName>
</protein>
<dbReference type="EC" id="2.7.2.11" evidence="1"/>
<dbReference type="EMBL" id="AE009948">
    <property type="protein sequence ID" value="AAM99190.1"/>
    <property type="molecule type" value="Genomic_DNA"/>
</dbReference>
<dbReference type="RefSeq" id="NP_687318.1">
    <property type="nucleotide sequence ID" value="NC_004116.1"/>
</dbReference>
<dbReference type="RefSeq" id="WP_000820352.1">
    <property type="nucleotide sequence ID" value="NC_004116.1"/>
</dbReference>
<dbReference type="SMR" id="P65795"/>
<dbReference type="STRING" id="208435.SAG0283"/>
<dbReference type="KEGG" id="sag:SAG0283"/>
<dbReference type="PATRIC" id="fig|208435.3.peg.281"/>
<dbReference type="HOGENOM" id="CLU_025400_0_2_9"/>
<dbReference type="OrthoDB" id="9804434at2"/>
<dbReference type="UniPathway" id="UPA00098">
    <property type="reaction ID" value="UER00359"/>
</dbReference>
<dbReference type="Proteomes" id="UP000000821">
    <property type="component" value="Chromosome"/>
</dbReference>
<dbReference type="GO" id="GO:0005829">
    <property type="term" value="C:cytosol"/>
    <property type="evidence" value="ECO:0007669"/>
    <property type="project" value="TreeGrafter"/>
</dbReference>
<dbReference type="GO" id="GO:0005524">
    <property type="term" value="F:ATP binding"/>
    <property type="evidence" value="ECO:0007669"/>
    <property type="project" value="UniProtKB-KW"/>
</dbReference>
<dbReference type="GO" id="GO:0004349">
    <property type="term" value="F:glutamate 5-kinase activity"/>
    <property type="evidence" value="ECO:0007669"/>
    <property type="project" value="UniProtKB-UniRule"/>
</dbReference>
<dbReference type="GO" id="GO:0055129">
    <property type="term" value="P:L-proline biosynthetic process"/>
    <property type="evidence" value="ECO:0007669"/>
    <property type="project" value="UniProtKB-UniRule"/>
</dbReference>
<dbReference type="CDD" id="cd04242">
    <property type="entry name" value="AAK_G5K_ProB"/>
    <property type="match status" value="1"/>
</dbReference>
<dbReference type="FunFam" id="3.40.1160.10:FF:000018">
    <property type="entry name" value="Glutamate 5-kinase"/>
    <property type="match status" value="1"/>
</dbReference>
<dbReference type="Gene3D" id="3.40.1160.10">
    <property type="entry name" value="Acetylglutamate kinase-like"/>
    <property type="match status" value="1"/>
</dbReference>
<dbReference type="HAMAP" id="MF_00456">
    <property type="entry name" value="ProB"/>
    <property type="match status" value="1"/>
</dbReference>
<dbReference type="InterPro" id="IPR036393">
    <property type="entry name" value="AceGlu_kinase-like_sf"/>
</dbReference>
<dbReference type="InterPro" id="IPR001048">
    <property type="entry name" value="Asp/Glu/Uridylate_kinase"/>
</dbReference>
<dbReference type="InterPro" id="IPR041739">
    <property type="entry name" value="G5K_ProB"/>
</dbReference>
<dbReference type="InterPro" id="IPR001057">
    <property type="entry name" value="Glu/AcGlu_kinase"/>
</dbReference>
<dbReference type="InterPro" id="IPR011529">
    <property type="entry name" value="Glu_5kinase"/>
</dbReference>
<dbReference type="InterPro" id="IPR005715">
    <property type="entry name" value="Glu_5kinase/COase_Synthase"/>
</dbReference>
<dbReference type="InterPro" id="IPR019797">
    <property type="entry name" value="Glutamate_5-kinase_CS"/>
</dbReference>
<dbReference type="NCBIfam" id="TIGR01027">
    <property type="entry name" value="proB"/>
    <property type="match status" value="1"/>
</dbReference>
<dbReference type="PANTHER" id="PTHR43654">
    <property type="entry name" value="GLUTAMATE 5-KINASE"/>
    <property type="match status" value="1"/>
</dbReference>
<dbReference type="PANTHER" id="PTHR43654:SF1">
    <property type="entry name" value="ISOPENTENYL PHOSPHATE KINASE"/>
    <property type="match status" value="1"/>
</dbReference>
<dbReference type="Pfam" id="PF00696">
    <property type="entry name" value="AA_kinase"/>
    <property type="match status" value="1"/>
</dbReference>
<dbReference type="PIRSF" id="PIRSF000729">
    <property type="entry name" value="GK"/>
    <property type="match status" value="1"/>
</dbReference>
<dbReference type="PRINTS" id="PR00474">
    <property type="entry name" value="GLU5KINASE"/>
</dbReference>
<dbReference type="SUPFAM" id="SSF53633">
    <property type="entry name" value="Carbamate kinase-like"/>
    <property type="match status" value="1"/>
</dbReference>
<dbReference type="PROSITE" id="PS00902">
    <property type="entry name" value="GLUTAMATE_5_KINASE"/>
    <property type="match status" value="1"/>
</dbReference>
<feature type="chain" id="PRO_0000109728" description="Glutamate 5-kinase">
    <location>
        <begin position="1"/>
        <end position="267"/>
    </location>
</feature>
<feature type="binding site" evidence="1">
    <location>
        <position position="14"/>
    </location>
    <ligand>
        <name>ATP</name>
        <dbReference type="ChEBI" id="CHEBI:30616"/>
    </ligand>
</feature>
<feature type="binding site" evidence="1">
    <location>
        <position position="54"/>
    </location>
    <ligand>
        <name>substrate</name>
    </ligand>
</feature>
<feature type="binding site" evidence="1">
    <location>
        <position position="141"/>
    </location>
    <ligand>
        <name>substrate</name>
    </ligand>
</feature>
<feature type="binding site" evidence="1">
    <location>
        <position position="157"/>
    </location>
    <ligand>
        <name>substrate</name>
    </ligand>
</feature>
<feature type="binding site" evidence="1">
    <location>
        <begin position="177"/>
        <end position="178"/>
    </location>
    <ligand>
        <name>ATP</name>
        <dbReference type="ChEBI" id="CHEBI:30616"/>
    </ligand>
</feature>
<feature type="binding site" evidence="1">
    <location>
        <begin position="219"/>
        <end position="225"/>
    </location>
    <ligand>
        <name>ATP</name>
        <dbReference type="ChEBI" id="CHEBI:30616"/>
    </ligand>
</feature>
<accession>P65795</accession>
<accession>Q8E1S0</accession>
<accession>Q8E784</accession>
<gene>
    <name evidence="1" type="primary">proB</name>
    <name type="ordered locus">SAG0283</name>
</gene>
<sequence length="267" mass="29198">MKRHFETTRRIVIKVGTSSLVQTSGKINLSKIDHLAFVISSLMNRGMEVILVSSGAMGFGLDILKMDKRPQEISQQQAVSSVGQVAMMSLYSQIFSHYQTHVSQILLTRDVVVFPESLQNVTNSFESLLSMGILPIVNENDAVSVDEMDHKTKFGDNDRLSAVVAKITKADLLIMLSDIDGLFDKNPNIYDDAVLRSHVSEITDDIIKSAGGAGSKFGTGGMLSKIKSAQMVFDNNGQMILMNGANPRDILKVLDGHNIGTYFAQGK</sequence>
<proteinExistence type="inferred from homology"/>
<evidence type="ECO:0000255" key="1">
    <source>
        <dbReference type="HAMAP-Rule" id="MF_00456"/>
    </source>
</evidence>
<reference key="1">
    <citation type="journal article" date="2002" name="Proc. Natl. Acad. Sci. U.S.A.">
        <title>Complete genome sequence and comparative genomic analysis of an emerging human pathogen, serotype V Streptococcus agalactiae.</title>
        <authorList>
            <person name="Tettelin H."/>
            <person name="Masignani V."/>
            <person name="Cieslewicz M.J."/>
            <person name="Eisen J.A."/>
            <person name="Peterson S.N."/>
            <person name="Wessels M.R."/>
            <person name="Paulsen I.T."/>
            <person name="Nelson K.E."/>
            <person name="Margarit I."/>
            <person name="Read T.D."/>
            <person name="Madoff L.C."/>
            <person name="Wolf A.M."/>
            <person name="Beanan M.J."/>
            <person name="Brinkac L.M."/>
            <person name="Daugherty S.C."/>
            <person name="DeBoy R.T."/>
            <person name="Durkin A.S."/>
            <person name="Kolonay J.F."/>
            <person name="Madupu R."/>
            <person name="Lewis M.R."/>
            <person name="Radune D."/>
            <person name="Fedorova N.B."/>
            <person name="Scanlan D."/>
            <person name="Khouri H.M."/>
            <person name="Mulligan S."/>
            <person name="Carty H.A."/>
            <person name="Cline R.T."/>
            <person name="Van Aken S.E."/>
            <person name="Gill J."/>
            <person name="Scarselli M."/>
            <person name="Mora M."/>
            <person name="Iacobini E.T."/>
            <person name="Brettoni C."/>
            <person name="Galli G."/>
            <person name="Mariani M."/>
            <person name="Vegni F."/>
            <person name="Maione D."/>
            <person name="Rinaudo D."/>
            <person name="Rappuoli R."/>
            <person name="Telford J.L."/>
            <person name="Kasper D.L."/>
            <person name="Grandi G."/>
            <person name="Fraser C.M."/>
        </authorList>
    </citation>
    <scope>NUCLEOTIDE SEQUENCE [LARGE SCALE GENOMIC DNA]</scope>
    <source>
        <strain>ATCC BAA-611 / 2603 V/R</strain>
    </source>
</reference>
<keyword id="KW-0028">Amino-acid biosynthesis</keyword>
<keyword id="KW-0067">ATP-binding</keyword>
<keyword id="KW-0963">Cytoplasm</keyword>
<keyword id="KW-0418">Kinase</keyword>
<keyword id="KW-0547">Nucleotide-binding</keyword>
<keyword id="KW-0641">Proline biosynthesis</keyword>
<keyword id="KW-1185">Reference proteome</keyword>
<keyword id="KW-0808">Transferase</keyword>
<comment type="function">
    <text evidence="1">Catalyzes the transfer of a phosphate group to glutamate to form L-glutamate 5-phosphate.</text>
</comment>
<comment type="catalytic activity">
    <reaction evidence="1">
        <text>L-glutamate + ATP = L-glutamyl 5-phosphate + ADP</text>
        <dbReference type="Rhea" id="RHEA:14877"/>
        <dbReference type="ChEBI" id="CHEBI:29985"/>
        <dbReference type="ChEBI" id="CHEBI:30616"/>
        <dbReference type="ChEBI" id="CHEBI:58274"/>
        <dbReference type="ChEBI" id="CHEBI:456216"/>
        <dbReference type="EC" id="2.7.2.11"/>
    </reaction>
</comment>
<comment type="pathway">
    <text evidence="1">Amino-acid biosynthesis; L-proline biosynthesis; L-glutamate 5-semialdehyde from L-glutamate: step 1/2.</text>
</comment>
<comment type="subcellular location">
    <subcellularLocation>
        <location evidence="1">Cytoplasm</location>
    </subcellularLocation>
</comment>
<comment type="similarity">
    <text evidence="1">Belongs to the glutamate 5-kinase family.</text>
</comment>
<name>PROB_STRA5</name>